<organism>
    <name type="scientific">Staphylococcus carnosus (strain TM300)</name>
    <dbReference type="NCBI Taxonomy" id="396513"/>
    <lineage>
        <taxon>Bacteria</taxon>
        <taxon>Bacillati</taxon>
        <taxon>Bacillota</taxon>
        <taxon>Bacilli</taxon>
        <taxon>Bacillales</taxon>
        <taxon>Staphylococcaceae</taxon>
        <taxon>Staphylococcus</taxon>
    </lineage>
</organism>
<protein>
    <recommendedName>
        <fullName evidence="1">Peptidase T</fullName>
        <ecNumber evidence="1">3.4.11.4</ecNumber>
    </recommendedName>
    <alternativeName>
        <fullName evidence="1">Aminotripeptidase</fullName>
        <shortName evidence="1">Tripeptidase</shortName>
    </alternativeName>
    <alternativeName>
        <fullName evidence="1">Tripeptide aminopeptidase</fullName>
    </alternativeName>
</protein>
<keyword id="KW-0031">Aminopeptidase</keyword>
<keyword id="KW-0963">Cytoplasm</keyword>
<keyword id="KW-0378">Hydrolase</keyword>
<keyword id="KW-0479">Metal-binding</keyword>
<keyword id="KW-0482">Metalloprotease</keyword>
<keyword id="KW-0645">Protease</keyword>
<keyword id="KW-1185">Reference proteome</keyword>
<keyword id="KW-0862">Zinc</keyword>
<sequence>MKEELIDRLKRYAEIDTQSDPDSESTPSTEKQRDLLNLLKQELEELGLQTDIDDNGYLFATLESNIANEVPTVGFLAHVDTSHDFNASNVKPQIIENYDGKPIQLGDTDRELNQEVFPAMKSVEGHTLMITDGTSLLGADDKAGVAEIMTALTYLVEHPEVKHGRIRVAFTPDEEIGRGPHKFDVKRFDADFAYTMDGSQYGELQFESFNAAEATITCHGVNVHPGSAKDVMVNAIKLGERFDSMLPEDEVPEKTEGYEGFFHLMNFNGTTEKAQLKYIIRDHDRERFEARKACLLEIRDQINTVYNNDPVEVDMYDQYHNMAEKINEVPEVIEVPKRVFKKLGIEPNTEPIRGGTDGSQLSFMGLPTPNIFTGCDNFHGPFEYASIDVMERAVEVILGIAEEIAQPTDK</sequence>
<comment type="function">
    <text evidence="1">Cleaves the N-terminal amino acid of tripeptides.</text>
</comment>
<comment type="catalytic activity">
    <reaction evidence="1">
        <text>Release of the N-terminal residue from a tripeptide.</text>
        <dbReference type="EC" id="3.4.11.4"/>
    </reaction>
</comment>
<comment type="cofactor">
    <cofactor evidence="1">
        <name>Zn(2+)</name>
        <dbReference type="ChEBI" id="CHEBI:29105"/>
    </cofactor>
    <text evidence="1">Binds 2 Zn(2+) ions per subunit.</text>
</comment>
<comment type="subcellular location">
    <subcellularLocation>
        <location evidence="1">Cytoplasm</location>
    </subcellularLocation>
</comment>
<comment type="similarity">
    <text evidence="1">Belongs to the peptidase M20B family.</text>
</comment>
<gene>
    <name evidence="1" type="primary">pepT</name>
    <name type="ordered locus">Sca_0391</name>
</gene>
<dbReference type="EC" id="3.4.11.4" evidence="1"/>
<dbReference type="EMBL" id="AM295250">
    <property type="protein sequence ID" value="CAL27305.1"/>
    <property type="molecule type" value="Genomic_DNA"/>
</dbReference>
<dbReference type="RefSeq" id="WP_015899650.1">
    <property type="nucleotide sequence ID" value="NC_012121.1"/>
</dbReference>
<dbReference type="SMR" id="B9DK09"/>
<dbReference type="MEROPS" id="M20.003"/>
<dbReference type="GeneID" id="93795321"/>
<dbReference type="KEGG" id="sca:SCA_0391"/>
<dbReference type="eggNOG" id="COG2195">
    <property type="taxonomic scope" value="Bacteria"/>
</dbReference>
<dbReference type="HOGENOM" id="CLU_053676_0_0_9"/>
<dbReference type="OrthoDB" id="9804934at2"/>
<dbReference type="BioCyc" id="SCAR396513:SCA_RS01995-MONOMER"/>
<dbReference type="Proteomes" id="UP000000444">
    <property type="component" value="Chromosome"/>
</dbReference>
<dbReference type="GO" id="GO:0005829">
    <property type="term" value="C:cytosol"/>
    <property type="evidence" value="ECO:0007669"/>
    <property type="project" value="TreeGrafter"/>
</dbReference>
<dbReference type="GO" id="GO:0008237">
    <property type="term" value="F:metallopeptidase activity"/>
    <property type="evidence" value="ECO:0007669"/>
    <property type="project" value="UniProtKB-KW"/>
</dbReference>
<dbReference type="GO" id="GO:0045148">
    <property type="term" value="F:tripeptide aminopeptidase activity"/>
    <property type="evidence" value="ECO:0007669"/>
    <property type="project" value="UniProtKB-UniRule"/>
</dbReference>
<dbReference type="GO" id="GO:0008270">
    <property type="term" value="F:zinc ion binding"/>
    <property type="evidence" value="ECO:0007669"/>
    <property type="project" value="UniProtKB-UniRule"/>
</dbReference>
<dbReference type="GO" id="GO:0043171">
    <property type="term" value="P:peptide catabolic process"/>
    <property type="evidence" value="ECO:0007669"/>
    <property type="project" value="UniProtKB-UniRule"/>
</dbReference>
<dbReference type="GO" id="GO:0006508">
    <property type="term" value="P:proteolysis"/>
    <property type="evidence" value="ECO:0007669"/>
    <property type="project" value="UniProtKB-UniRule"/>
</dbReference>
<dbReference type="CDD" id="cd03892">
    <property type="entry name" value="M20_peptT"/>
    <property type="match status" value="1"/>
</dbReference>
<dbReference type="FunFam" id="3.30.70.360:FF:000002">
    <property type="entry name" value="Peptidase T"/>
    <property type="match status" value="1"/>
</dbReference>
<dbReference type="Gene3D" id="3.30.70.360">
    <property type="match status" value="1"/>
</dbReference>
<dbReference type="Gene3D" id="3.40.630.10">
    <property type="entry name" value="Zn peptidases"/>
    <property type="match status" value="1"/>
</dbReference>
<dbReference type="HAMAP" id="MF_00550">
    <property type="entry name" value="Aminopeptidase_M20"/>
    <property type="match status" value="1"/>
</dbReference>
<dbReference type="InterPro" id="IPR001261">
    <property type="entry name" value="ArgE/DapE_CS"/>
</dbReference>
<dbReference type="InterPro" id="IPR036264">
    <property type="entry name" value="Bact_exopeptidase_dim_dom"/>
</dbReference>
<dbReference type="InterPro" id="IPR002933">
    <property type="entry name" value="Peptidase_M20"/>
</dbReference>
<dbReference type="InterPro" id="IPR011650">
    <property type="entry name" value="Peptidase_M20_dimer"/>
</dbReference>
<dbReference type="InterPro" id="IPR010161">
    <property type="entry name" value="Peptidase_M20B"/>
</dbReference>
<dbReference type="NCBIfam" id="TIGR01882">
    <property type="entry name" value="peptidase-T"/>
    <property type="match status" value="1"/>
</dbReference>
<dbReference type="NCBIfam" id="NF003976">
    <property type="entry name" value="PRK05469.1"/>
    <property type="match status" value="1"/>
</dbReference>
<dbReference type="NCBIfam" id="NF009920">
    <property type="entry name" value="PRK13381.1"/>
    <property type="match status" value="1"/>
</dbReference>
<dbReference type="PANTHER" id="PTHR42994">
    <property type="entry name" value="PEPTIDASE T"/>
    <property type="match status" value="1"/>
</dbReference>
<dbReference type="PANTHER" id="PTHR42994:SF1">
    <property type="entry name" value="PEPTIDASE T"/>
    <property type="match status" value="1"/>
</dbReference>
<dbReference type="Pfam" id="PF07687">
    <property type="entry name" value="M20_dimer"/>
    <property type="match status" value="1"/>
</dbReference>
<dbReference type="Pfam" id="PF01546">
    <property type="entry name" value="Peptidase_M20"/>
    <property type="match status" value="1"/>
</dbReference>
<dbReference type="PIRSF" id="PIRSF037215">
    <property type="entry name" value="Peptidase_M20B"/>
    <property type="match status" value="1"/>
</dbReference>
<dbReference type="SUPFAM" id="SSF55031">
    <property type="entry name" value="Bacterial exopeptidase dimerisation domain"/>
    <property type="match status" value="1"/>
</dbReference>
<dbReference type="SUPFAM" id="SSF53187">
    <property type="entry name" value="Zn-dependent exopeptidases"/>
    <property type="match status" value="1"/>
</dbReference>
<dbReference type="PROSITE" id="PS00758">
    <property type="entry name" value="ARGE_DAPE_CPG2_1"/>
    <property type="match status" value="1"/>
</dbReference>
<dbReference type="PROSITE" id="PS00759">
    <property type="entry name" value="ARGE_DAPE_CPG2_2"/>
    <property type="match status" value="1"/>
</dbReference>
<name>PEPT_STACT</name>
<proteinExistence type="inferred from homology"/>
<accession>B9DK09</accession>
<feature type="chain" id="PRO_1000200897" description="Peptidase T">
    <location>
        <begin position="1"/>
        <end position="410"/>
    </location>
</feature>
<feature type="region of interest" description="Disordered" evidence="2">
    <location>
        <begin position="11"/>
        <end position="30"/>
    </location>
</feature>
<feature type="active site" evidence="1">
    <location>
        <position position="80"/>
    </location>
</feature>
<feature type="active site" description="Proton acceptor" evidence="1">
    <location>
        <position position="174"/>
    </location>
</feature>
<feature type="binding site" evidence="1">
    <location>
        <position position="78"/>
    </location>
    <ligand>
        <name>Zn(2+)</name>
        <dbReference type="ChEBI" id="CHEBI:29105"/>
        <label>1</label>
    </ligand>
</feature>
<feature type="binding site" evidence="1">
    <location>
        <position position="140"/>
    </location>
    <ligand>
        <name>Zn(2+)</name>
        <dbReference type="ChEBI" id="CHEBI:29105"/>
        <label>1</label>
    </ligand>
</feature>
<feature type="binding site" evidence="1">
    <location>
        <position position="140"/>
    </location>
    <ligand>
        <name>Zn(2+)</name>
        <dbReference type="ChEBI" id="CHEBI:29105"/>
        <label>2</label>
    </ligand>
</feature>
<feature type="binding site" evidence="1">
    <location>
        <position position="175"/>
    </location>
    <ligand>
        <name>Zn(2+)</name>
        <dbReference type="ChEBI" id="CHEBI:29105"/>
        <label>2</label>
    </ligand>
</feature>
<feature type="binding site" evidence="1">
    <location>
        <position position="197"/>
    </location>
    <ligand>
        <name>Zn(2+)</name>
        <dbReference type="ChEBI" id="CHEBI:29105"/>
        <label>1</label>
    </ligand>
</feature>
<feature type="binding site" evidence="1">
    <location>
        <position position="379"/>
    </location>
    <ligand>
        <name>Zn(2+)</name>
        <dbReference type="ChEBI" id="CHEBI:29105"/>
        <label>2</label>
    </ligand>
</feature>
<evidence type="ECO:0000255" key="1">
    <source>
        <dbReference type="HAMAP-Rule" id="MF_00550"/>
    </source>
</evidence>
<evidence type="ECO:0000256" key="2">
    <source>
        <dbReference type="SAM" id="MobiDB-lite"/>
    </source>
</evidence>
<reference key="1">
    <citation type="journal article" date="2009" name="Appl. Environ. Microbiol.">
        <title>Genome analysis of the meat starter culture bacterium Staphylococcus carnosus TM300.</title>
        <authorList>
            <person name="Rosenstein R."/>
            <person name="Nerz C."/>
            <person name="Biswas L."/>
            <person name="Resch A."/>
            <person name="Raddatz G."/>
            <person name="Schuster S.C."/>
            <person name="Goetz F."/>
        </authorList>
    </citation>
    <scope>NUCLEOTIDE SEQUENCE [LARGE SCALE GENOMIC DNA]</scope>
    <source>
        <strain>TM300</strain>
    </source>
</reference>